<accession>Q82X77</accession>
<proteinExistence type="inferred from homology"/>
<name>RS8_NITEU</name>
<keyword id="KW-1185">Reference proteome</keyword>
<keyword id="KW-0687">Ribonucleoprotein</keyword>
<keyword id="KW-0689">Ribosomal protein</keyword>
<keyword id="KW-0694">RNA-binding</keyword>
<keyword id="KW-0699">rRNA-binding</keyword>
<evidence type="ECO:0000255" key="1">
    <source>
        <dbReference type="HAMAP-Rule" id="MF_01302"/>
    </source>
</evidence>
<evidence type="ECO:0000305" key="2"/>
<organism>
    <name type="scientific">Nitrosomonas europaea (strain ATCC 19718 / CIP 103999 / KCTC 2705 / NBRC 14298)</name>
    <dbReference type="NCBI Taxonomy" id="228410"/>
    <lineage>
        <taxon>Bacteria</taxon>
        <taxon>Pseudomonadati</taxon>
        <taxon>Pseudomonadota</taxon>
        <taxon>Betaproteobacteria</taxon>
        <taxon>Nitrosomonadales</taxon>
        <taxon>Nitrosomonadaceae</taxon>
        <taxon>Nitrosomonas</taxon>
    </lineage>
</organism>
<dbReference type="EMBL" id="AL954747">
    <property type="protein sequence ID" value="CAD84326.1"/>
    <property type="molecule type" value="Genomic_DNA"/>
</dbReference>
<dbReference type="RefSeq" id="WP_011111050.1">
    <property type="nucleotide sequence ID" value="NC_004757.1"/>
</dbReference>
<dbReference type="SMR" id="Q82X77"/>
<dbReference type="STRING" id="228410.NE0415"/>
<dbReference type="GeneID" id="87103623"/>
<dbReference type="KEGG" id="neu:NE0415"/>
<dbReference type="eggNOG" id="COG0096">
    <property type="taxonomic scope" value="Bacteria"/>
</dbReference>
<dbReference type="HOGENOM" id="CLU_098428_0_0_4"/>
<dbReference type="OrthoDB" id="9802617at2"/>
<dbReference type="PhylomeDB" id="Q82X77"/>
<dbReference type="Proteomes" id="UP000001416">
    <property type="component" value="Chromosome"/>
</dbReference>
<dbReference type="GO" id="GO:1990904">
    <property type="term" value="C:ribonucleoprotein complex"/>
    <property type="evidence" value="ECO:0007669"/>
    <property type="project" value="UniProtKB-KW"/>
</dbReference>
<dbReference type="GO" id="GO:0005840">
    <property type="term" value="C:ribosome"/>
    <property type="evidence" value="ECO:0007669"/>
    <property type="project" value="UniProtKB-KW"/>
</dbReference>
<dbReference type="GO" id="GO:0019843">
    <property type="term" value="F:rRNA binding"/>
    <property type="evidence" value="ECO:0007669"/>
    <property type="project" value="UniProtKB-UniRule"/>
</dbReference>
<dbReference type="GO" id="GO:0003735">
    <property type="term" value="F:structural constituent of ribosome"/>
    <property type="evidence" value="ECO:0007669"/>
    <property type="project" value="InterPro"/>
</dbReference>
<dbReference type="GO" id="GO:0006412">
    <property type="term" value="P:translation"/>
    <property type="evidence" value="ECO:0007669"/>
    <property type="project" value="UniProtKB-UniRule"/>
</dbReference>
<dbReference type="FunFam" id="3.30.1370.30:FF:000002">
    <property type="entry name" value="30S ribosomal protein S8"/>
    <property type="match status" value="1"/>
</dbReference>
<dbReference type="FunFam" id="3.30.1490.10:FF:000001">
    <property type="entry name" value="30S ribosomal protein S8"/>
    <property type="match status" value="1"/>
</dbReference>
<dbReference type="Gene3D" id="3.30.1370.30">
    <property type="match status" value="1"/>
</dbReference>
<dbReference type="Gene3D" id="3.30.1490.10">
    <property type="match status" value="1"/>
</dbReference>
<dbReference type="HAMAP" id="MF_01302_B">
    <property type="entry name" value="Ribosomal_uS8_B"/>
    <property type="match status" value="1"/>
</dbReference>
<dbReference type="InterPro" id="IPR000630">
    <property type="entry name" value="Ribosomal_uS8"/>
</dbReference>
<dbReference type="InterPro" id="IPR047863">
    <property type="entry name" value="Ribosomal_uS8_CS"/>
</dbReference>
<dbReference type="InterPro" id="IPR035987">
    <property type="entry name" value="Ribosomal_uS8_sf"/>
</dbReference>
<dbReference type="NCBIfam" id="NF001109">
    <property type="entry name" value="PRK00136.1"/>
    <property type="match status" value="1"/>
</dbReference>
<dbReference type="PANTHER" id="PTHR11758">
    <property type="entry name" value="40S RIBOSOMAL PROTEIN S15A"/>
    <property type="match status" value="1"/>
</dbReference>
<dbReference type="Pfam" id="PF00410">
    <property type="entry name" value="Ribosomal_S8"/>
    <property type="match status" value="1"/>
</dbReference>
<dbReference type="SUPFAM" id="SSF56047">
    <property type="entry name" value="Ribosomal protein S8"/>
    <property type="match status" value="1"/>
</dbReference>
<dbReference type="PROSITE" id="PS00053">
    <property type="entry name" value="RIBOSOMAL_S8"/>
    <property type="match status" value="1"/>
</dbReference>
<reference key="1">
    <citation type="journal article" date="2003" name="J. Bacteriol.">
        <title>Complete genome sequence of the ammonia-oxidizing bacterium and obligate chemolithoautotroph Nitrosomonas europaea.</title>
        <authorList>
            <person name="Chain P."/>
            <person name="Lamerdin J.E."/>
            <person name="Larimer F.W."/>
            <person name="Regala W."/>
            <person name="Lao V."/>
            <person name="Land M.L."/>
            <person name="Hauser L."/>
            <person name="Hooper A.B."/>
            <person name="Klotz M.G."/>
            <person name="Norton J."/>
            <person name="Sayavedra-Soto L.A."/>
            <person name="Arciero D.M."/>
            <person name="Hommes N.G."/>
            <person name="Whittaker M.M."/>
            <person name="Arp D.J."/>
        </authorList>
    </citation>
    <scope>NUCLEOTIDE SEQUENCE [LARGE SCALE GENOMIC DNA]</scope>
    <source>
        <strain>ATCC 19718 / CIP 103999 / KCTC 2705 / NBRC 14298</strain>
    </source>
</reference>
<feature type="chain" id="PRO_0000126453" description="Small ribosomal subunit protein uS8">
    <location>
        <begin position="1"/>
        <end position="131"/>
    </location>
</feature>
<comment type="function">
    <text evidence="1">One of the primary rRNA binding proteins, it binds directly to 16S rRNA central domain where it helps coordinate assembly of the platform of the 30S subunit.</text>
</comment>
<comment type="subunit">
    <text evidence="1">Part of the 30S ribosomal subunit. Contacts proteins S5 and S12.</text>
</comment>
<comment type="similarity">
    <text evidence="1">Belongs to the universal ribosomal protein uS8 family.</text>
</comment>
<gene>
    <name evidence="1" type="primary">rpsH</name>
    <name type="ordered locus">NE0415</name>
</gene>
<sequence length="131" mass="14454">MCMTDPIADMLTRIRNAQSAEQKEIKMPSSKLKKAILKILKEEGYIENFQEDPNHKKPSISVILKYFNGEPVITSISRVSKPGLRSYKSKNDLPRVMNGLGVAIVSTSKGVMTERTARMAGVGGELLCVVT</sequence>
<protein>
    <recommendedName>
        <fullName evidence="1">Small ribosomal subunit protein uS8</fullName>
    </recommendedName>
    <alternativeName>
        <fullName evidence="2">30S ribosomal protein S8</fullName>
    </alternativeName>
</protein>